<dbReference type="EMBL" id="AL138656">
    <property type="protein sequence ID" value="CAB77565.1"/>
    <property type="molecule type" value="Genomic_DNA"/>
</dbReference>
<dbReference type="EMBL" id="CP002686">
    <property type="protein sequence ID" value="AEE79233.1"/>
    <property type="molecule type" value="Genomic_DNA"/>
</dbReference>
<dbReference type="EMBL" id="BT020275">
    <property type="protein sequence ID" value="AAV84496.1"/>
    <property type="molecule type" value="mRNA"/>
</dbReference>
<dbReference type="EMBL" id="BT020512">
    <property type="protein sequence ID" value="AAW39013.1"/>
    <property type="molecule type" value="mRNA"/>
</dbReference>
<dbReference type="EMBL" id="BX824700">
    <property type="status" value="NOT_ANNOTATED_CDS"/>
    <property type="molecule type" value="mRNA"/>
</dbReference>
<dbReference type="PIR" id="T47604">
    <property type="entry name" value="T47604"/>
</dbReference>
<dbReference type="RefSeq" id="NP_974431.2">
    <molecule id="Q9M1I2-1"/>
    <property type="nucleotide sequence ID" value="NM_202702.3"/>
</dbReference>
<dbReference type="SMR" id="Q9M1I2"/>
<dbReference type="FunCoup" id="Q9M1I2">
    <property type="interactions" value="1786"/>
</dbReference>
<dbReference type="PaxDb" id="3702-AT3G54450.1"/>
<dbReference type="EnsemblPlants" id="AT3G54450.1">
    <molecule id="Q9M1I2-1"/>
    <property type="protein sequence ID" value="AT3G54450.1"/>
    <property type="gene ID" value="AT3G54450"/>
</dbReference>
<dbReference type="GeneID" id="2745964"/>
<dbReference type="Gramene" id="AT3G54450.1">
    <molecule id="Q9M1I2-1"/>
    <property type="protein sequence ID" value="AT3G54450.1"/>
    <property type="gene ID" value="AT3G54450"/>
</dbReference>
<dbReference type="KEGG" id="ath:AT3G54450"/>
<dbReference type="Araport" id="AT3G54450"/>
<dbReference type="TAIR" id="AT3G54450"/>
<dbReference type="eggNOG" id="KOG1237">
    <property type="taxonomic scope" value="Eukaryota"/>
</dbReference>
<dbReference type="HOGENOM" id="CLU_009313_4_1_1"/>
<dbReference type="InParanoid" id="Q9M1I2"/>
<dbReference type="OMA" id="CNGQANN"/>
<dbReference type="OrthoDB" id="8904098at2759"/>
<dbReference type="PhylomeDB" id="Q9M1I2"/>
<dbReference type="PRO" id="PR:Q9M1I2"/>
<dbReference type="Proteomes" id="UP000006548">
    <property type="component" value="Chromosome 3"/>
</dbReference>
<dbReference type="ExpressionAtlas" id="Q9M1I2">
    <property type="expression patterns" value="baseline and differential"/>
</dbReference>
<dbReference type="GO" id="GO:0016020">
    <property type="term" value="C:membrane"/>
    <property type="evidence" value="ECO:0007669"/>
    <property type="project" value="UniProtKB-SubCell"/>
</dbReference>
<dbReference type="GO" id="GO:0071916">
    <property type="term" value="F:dipeptide transmembrane transporter activity"/>
    <property type="evidence" value="ECO:0007669"/>
    <property type="project" value="InterPro"/>
</dbReference>
<dbReference type="GO" id="GO:0042937">
    <property type="term" value="F:tripeptide transmembrane transporter activity"/>
    <property type="evidence" value="ECO:0007669"/>
    <property type="project" value="InterPro"/>
</dbReference>
<dbReference type="CDD" id="cd17417">
    <property type="entry name" value="MFS_NPF5"/>
    <property type="match status" value="1"/>
</dbReference>
<dbReference type="Gene3D" id="1.20.1250.20">
    <property type="entry name" value="MFS general substrate transporter like domains"/>
    <property type="match status" value="1"/>
</dbReference>
<dbReference type="InterPro" id="IPR036259">
    <property type="entry name" value="MFS_trans_sf"/>
</dbReference>
<dbReference type="InterPro" id="IPR044739">
    <property type="entry name" value="NRT1/PTR"/>
</dbReference>
<dbReference type="InterPro" id="IPR000109">
    <property type="entry name" value="POT_fam"/>
</dbReference>
<dbReference type="InterPro" id="IPR018456">
    <property type="entry name" value="PTR2_symporter_CS"/>
</dbReference>
<dbReference type="PANTHER" id="PTHR11654">
    <property type="entry name" value="OLIGOPEPTIDE TRANSPORTER-RELATED"/>
    <property type="match status" value="1"/>
</dbReference>
<dbReference type="Pfam" id="PF00854">
    <property type="entry name" value="PTR2"/>
    <property type="match status" value="1"/>
</dbReference>
<dbReference type="SUPFAM" id="SSF103473">
    <property type="entry name" value="MFS general substrate transporter"/>
    <property type="match status" value="1"/>
</dbReference>
<dbReference type="PROSITE" id="PS01022">
    <property type="entry name" value="PTR2_1"/>
    <property type="match status" value="1"/>
</dbReference>
<proteinExistence type="evidence at transcript level"/>
<accession>Q9M1I2</accession>
<accession>Q5PP22</accession>
<feature type="chain" id="PRO_0000399980" description="Protein NRT1/ PTR FAMILY 5.4">
    <location>
        <begin position="1"/>
        <end position="555"/>
    </location>
</feature>
<feature type="transmembrane region" description="Helical" evidence="3">
    <location>
        <begin position="18"/>
        <end position="38"/>
    </location>
</feature>
<feature type="transmembrane region" description="Helical" evidence="3">
    <location>
        <begin position="62"/>
        <end position="82"/>
    </location>
</feature>
<feature type="transmembrane region" description="Helical" evidence="3">
    <location>
        <begin position="87"/>
        <end position="107"/>
    </location>
</feature>
<feature type="transmembrane region" description="Helical" evidence="3">
    <location>
        <begin position="116"/>
        <end position="136"/>
    </location>
</feature>
<feature type="transmembrane region" description="Helical" evidence="3">
    <location>
        <begin position="159"/>
        <end position="179"/>
    </location>
</feature>
<feature type="transmembrane region" description="Helical" evidence="3">
    <location>
        <begin position="187"/>
        <end position="207"/>
    </location>
</feature>
<feature type="transmembrane region" description="Helical" evidence="3">
    <location>
        <begin position="311"/>
        <end position="331"/>
    </location>
</feature>
<feature type="transmembrane region" description="Helical" evidence="3">
    <location>
        <begin position="348"/>
        <end position="368"/>
    </location>
</feature>
<feature type="transmembrane region" description="Helical" evidence="3">
    <location>
        <begin position="392"/>
        <end position="412"/>
    </location>
</feature>
<feature type="transmembrane region" description="Helical" evidence="3">
    <location>
        <begin position="435"/>
        <end position="455"/>
    </location>
</feature>
<feature type="transmembrane region" description="Helical" evidence="3">
    <location>
        <begin position="470"/>
        <end position="490"/>
    </location>
</feature>
<feature type="transmembrane region" description="Helical" evidence="3">
    <location>
        <begin position="516"/>
        <end position="536"/>
    </location>
</feature>
<feature type="modified residue" description="Phosphothreonine" evidence="2">
    <location>
        <position position="86"/>
    </location>
</feature>
<feature type="splice variant" id="VSP_039952" description="In isoform 2." evidence="5 6">
    <location>
        <begin position="1"/>
        <end position="226"/>
    </location>
</feature>
<evidence type="ECO:0000250" key="1"/>
<evidence type="ECO:0000250" key="2">
    <source>
        <dbReference type="UniProtKB" id="Q05085"/>
    </source>
</evidence>
<evidence type="ECO:0000255" key="3"/>
<evidence type="ECO:0000269" key="4">
    <source>
    </source>
</evidence>
<evidence type="ECO:0000303" key="5">
    <source ref="3"/>
</evidence>
<evidence type="ECO:0000303" key="6">
    <source ref="4"/>
</evidence>
<evidence type="ECO:0000305" key="7"/>
<name>PTR46_ARATH</name>
<keyword id="KW-0025">Alternative splicing</keyword>
<keyword id="KW-0472">Membrane</keyword>
<keyword id="KW-0597">Phosphoprotein</keyword>
<keyword id="KW-1185">Reference proteome</keyword>
<keyword id="KW-0812">Transmembrane</keyword>
<keyword id="KW-1133">Transmembrane helix</keyword>
<keyword id="KW-0813">Transport</keyword>
<organism>
    <name type="scientific">Arabidopsis thaliana</name>
    <name type="common">Mouse-ear cress</name>
    <dbReference type="NCBI Taxonomy" id="3702"/>
    <lineage>
        <taxon>Eukaryota</taxon>
        <taxon>Viridiplantae</taxon>
        <taxon>Streptophyta</taxon>
        <taxon>Embryophyta</taxon>
        <taxon>Tracheophyta</taxon>
        <taxon>Spermatophyta</taxon>
        <taxon>Magnoliopsida</taxon>
        <taxon>eudicotyledons</taxon>
        <taxon>Gunneridae</taxon>
        <taxon>Pentapetalae</taxon>
        <taxon>rosids</taxon>
        <taxon>malvids</taxon>
        <taxon>Brassicales</taxon>
        <taxon>Brassicaceae</taxon>
        <taxon>Camelineae</taxon>
        <taxon>Arabidopsis</taxon>
    </lineage>
</organism>
<comment type="subcellular location">
    <subcellularLocation>
        <location evidence="1">Membrane</location>
        <topology evidence="1">Multi-pass membrane protein</topology>
    </subcellularLocation>
</comment>
<comment type="alternative products">
    <event type="alternative splicing"/>
    <isoform>
        <id>Q9M1I2-1</id>
        <name>1</name>
        <sequence type="displayed"/>
    </isoform>
    <isoform>
        <id>Q9M1I2-2</id>
        <name>2</name>
        <sequence type="described" ref="VSP_039952"/>
    </isoform>
</comment>
<comment type="tissue specificity">
    <text evidence="4">Expressed in roots and flowers.</text>
</comment>
<comment type="similarity">
    <text evidence="7">Belongs to the major facilitator superfamily. Proton-dependent oligopeptide transporter (POT/PTR) (TC 2.A.17) family.</text>
</comment>
<comment type="sequence caution" evidence="7">
    <conflict type="frameshift">
        <sequence resource="EMBL" id="BX824700"/>
    </conflict>
</comment>
<reference key="1">
    <citation type="journal article" date="2000" name="Nature">
        <title>Sequence and analysis of chromosome 3 of the plant Arabidopsis thaliana.</title>
        <authorList>
            <person name="Salanoubat M."/>
            <person name="Lemcke K."/>
            <person name="Rieger M."/>
            <person name="Ansorge W."/>
            <person name="Unseld M."/>
            <person name="Fartmann B."/>
            <person name="Valle G."/>
            <person name="Bloecker H."/>
            <person name="Perez-Alonso M."/>
            <person name="Obermaier B."/>
            <person name="Delseny M."/>
            <person name="Boutry M."/>
            <person name="Grivell L.A."/>
            <person name="Mache R."/>
            <person name="Puigdomenech P."/>
            <person name="De Simone V."/>
            <person name="Choisne N."/>
            <person name="Artiguenave F."/>
            <person name="Robert C."/>
            <person name="Brottier P."/>
            <person name="Wincker P."/>
            <person name="Cattolico L."/>
            <person name="Weissenbach J."/>
            <person name="Saurin W."/>
            <person name="Quetier F."/>
            <person name="Schaefer M."/>
            <person name="Mueller-Auer S."/>
            <person name="Gabel C."/>
            <person name="Fuchs M."/>
            <person name="Benes V."/>
            <person name="Wurmbach E."/>
            <person name="Drzonek H."/>
            <person name="Erfle H."/>
            <person name="Jordan N."/>
            <person name="Bangert S."/>
            <person name="Wiedelmann R."/>
            <person name="Kranz H."/>
            <person name="Voss H."/>
            <person name="Holland R."/>
            <person name="Brandt P."/>
            <person name="Nyakatura G."/>
            <person name="Vezzi A."/>
            <person name="D'Angelo M."/>
            <person name="Pallavicini A."/>
            <person name="Toppo S."/>
            <person name="Simionati B."/>
            <person name="Conrad A."/>
            <person name="Hornischer K."/>
            <person name="Kauer G."/>
            <person name="Loehnert T.-H."/>
            <person name="Nordsiek G."/>
            <person name="Reichelt J."/>
            <person name="Scharfe M."/>
            <person name="Schoen O."/>
            <person name="Bargues M."/>
            <person name="Terol J."/>
            <person name="Climent J."/>
            <person name="Navarro P."/>
            <person name="Collado C."/>
            <person name="Perez-Perez A."/>
            <person name="Ottenwaelder B."/>
            <person name="Duchemin D."/>
            <person name="Cooke R."/>
            <person name="Laudie M."/>
            <person name="Berger-Llauro C."/>
            <person name="Purnelle B."/>
            <person name="Masuy D."/>
            <person name="de Haan M."/>
            <person name="Maarse A.C."/>
            <person name="Alcaraz J.-P."/>
            <person name="Cottet A."/>
            <person name="Casacuberta E."/>
            <person name="Monfort A."/>
            <person name="Argiriou A."/>
            <person name="Flores M."/>
            <person name="Liguori R."/>
            <person name="Vitale D."/>
            <person name="Mannhaupt G."/>
            <person name="Haase D."/>
            <person name="Schoof H."/>
            <person name="Rudd S."/>
            <person name="Zaccaria P."/>
            <person name="Mewes H.-W."/>
            <person name="Mayer K.F.X."/>
            <person name="Kaul S."/>
            <person name="Town C.D."/>
            <person name="Koo H.L."/>
            <person name="Tallon L.J."/>
            <person name="Jenkins J."/>
            <person name="Rooney T."/>
            <person name="Rizzo M."/>
            <person name="Walts A."/>
            <person name="Utterback T."/>
            <person name="Fujii C.Y."/>
            <person name="Shea T.P."/>
            <person name="Creasy T.H."/>
            <person name="Haas B."/>
            <person name="Maiti R."/>
            <person name="Wu D."/>
            <person name="Peterson J."/>
            <person name="Van Aken S."/>
            <person name="Pai G."/>
            <person name="Militscher J."/>
            <person name="Sellers P."/>
            <person name="Gill J.E."/>
            <person name="Feldblyum T.V."/>
            <person name="Preuss D."/>
            <person name="Lin X."/>
            <person name="Nierman W.C."/>
            <person name="Salzberg S.L."/>
            <person name="White O."/>
            <person name="Venter J.C."/>
            <person name="Fraser C.M."/>
            <person name="Kaneko T."/>
            <person name="Nakamura Y."/>
            <person name="Sato S."/>
            <person name="Kato T."/>
            <person name="Asamizu E."/>
            <person name="Sasamoto S."/>
            <person name="Kimura T."/>
            <person name="Idesawa K."/>
            <person name="Kawashima K."/>
            <person name="Kishida Y."/>
            <person name="Kiyokawa C."/>
            <person name="Kohara M."/>
            <person name="Matsumoto M."/>
            <person name="Matsuno A."/>
            <person name="Muraki A."/>
            <person name="Nakayama S."/>
            <person name="Nakazaki N."/>
            <person name="Shinpo S."/>
            <person name="Takeuchi C."/>
            <person name="Wada T."/>
            <person name="Watanabe A."/>
            <person name="Yamada M."/>
            <person name="Yasuda M."/>
            <person name="Tabata S."/>
        </authorList>
    </citation>
    <scope>NUCLEOTIDE SEQUENCE [LARGE SCALE GENOMIC DNA]</scope>
    <source>
        <strain>cv. Columbia</strain>
    </source>
</reference>
<reference key="2">
    <citation type="journal article" date="2017" name="Plant J.">
        <title>Araport11: a complete reannotation of the Arabidopsis thaliana reference genome.</title>
        <authorList>
            <person name="Cheng C.Y."/>
            <person name="Krishnakumar V."/>
            <person name="Chan A.P."/>
            <person name="Thibaud-Nissen F."/>
            <person name="Schobel S."/>
            <person name="Town C.D."/>
        </authorList>
    </citation>
    <scope>GENOME REANNOTATION</scope>
    <source>
        <strain>cv. Columbia</strain>
    </source>
</reference>
<reference key="3">
    <citation type="submission" date="2004-12" db="EMBL/GenBank/DDBJ databases">
        <title>Arabidopsis ORF clones.</title>
        <authorList>
            <person name="Cheuk R."/>
            <person name="Chen H."/>
            <person name="Kim C.J."/>
            <person name="Shinn P."/>
            <person name="Ecker J.R."/>
        </authorList>
    </citation>
    <scope>NUCLEOTIDE SEQUENCE [LARGE SCALE MRNA] (ISOFORM 2)</scope>
    <source>
        <strain>cv. Columbia</strain>
    </source>
</reference>
<reference key="4">
    <citation type="submission" date="2005-01" db="EMBL/GenBank/DDBJ databases">
        <title>Arabidopsis ORF clones.</title>
        <authorList>
            <person name="Kim C.J."/>
            <person name="Chen H."/>
            <person name="Cheuk R."/>
            <person name="Shinn P."/>
            <person name="Ecker J.R."/>
        </authorList>
    </citation>
    <scope>NUCLEOTIDE SEQUENCE [LARGE SCALE MRNA] (ISOFORM 2)</scope>
    <source>
        <strain>cv. Columbia</strain>
    </source>
</reference>
<reference key="5">
    <citation type="journal article" date="2004" name="Genome Res.">
        <title>Whole genome sequence comparisons and 'full-length' cDNA sequences: a combined approach to evaluate and improve Arabidopsis genome annotation.</title>
        <authorList>
            <person name="Castelli V."/>
            <person name="Aury J.-M."/>
            <person name="Jaillon O."/>
            <person name="Wincker P."/>
            <person name="Clepet C."/>
            <person name="Menard M."/>
            <person name="Cruaud C."/>
            <person name="Quetier F."/>
            <person name="Scarpelli C."/>
            <person name="Schaechter V."/>
            <person name="Temple G."/>
            <person name="Caboche M."/>
            <person name="Weissenbach J."/>
            <person name="Salanoubat M."/>
        </authorList>
    </citation>
    <scope>NUCLEOTIDE SEQUENCE [LARGE SCALE MRNA] OF 3-555 (ISOFORM 1)</scope>
    <source>
        <strain>cv. Columbia</strain>
    </source>
</reference>
<reference key="6">
    <citation type="journal article" date="2007" name="FEBS Lett.">
        <title>Nitrate transporters and peptide transporters.</title>
        <authorList>
            <person name="Tsay Y.F."/>
            <person name="Chiu C.C."/>
            <person name="Tsai C.B."/>
            <person name="Ho C.H."/>
            <person name="Hsu P.K."/>
        </authorList>
    </citation>
    <scope>TISSUE SPECIFICITY</scope>
    <scope>GENE FAMILY</scope>
</reference>
<reference key="7">
    <citation type="journal article" date="2010" name="Plant Cell">
        <title>The Arabidopsis nitrate transporter NRT1.8 functions in nitrate removal from the xylem sap and mediates cadmium tolerance.</title>
        <authorList>
            <person name="Li J.Y."/>
            <person name="Fu Y.L."/>
            <person name="Pike S.M."/>
            <person name="Bao J."/>
            <person name="Tian W."/>
            <person name="Zhang Y."/>
            <person name="Chen C.Z."/>
            <person name="Zhang Y."/>
            <person name="Li H.M."/>
            <person name="Huang J."/>
            <person name="Li L.G."/>
            <person name="Schroeder J.I."/>
            <person name="Gassmann W."/>
            <person name="Gong J.M."/>
        </authorList>
    </citation>
    <scope>GENE FAMILY</scope>
</reference>
<reference key="8">
    <citation type="journal article" date="2014" name="Trends Plant Sci.">
        <title>A unified nomenclature of NITRATE TRANSPORTER 1/PEPTIDE TRANSPORTER family members in plants.</title>
        <authorList>
            <person name="Leran S."/>
            <person name="Varala K."/>
            <person name="Boyer J.C."/>
            <person name="Chiurazzi M."/>
            <person name="Crawford N."/>
            <person name="Daniel-Vedele F."/>
            <person name="David L."/>
            <person name="Dickstein R."/>
            <person name="Fernandez E."/>
            <person name="Forde B."/>
            <person name="Gassmann W."/>
            <person name="Geiger D."/>
            <person name="Gojon A."/>
            <person name="Gong J.M."/>
            <person name="Halkier B.A."/>
            <person name="Harris J.M."/>
            <person name="Hedrich R."/>
            <person name="Limami A.M."/>
            <person name="Rentsch D."/>
            <person name="Seo M."/>
            <person name="Tsay Y.F."/>
            <person name="Zhang M."/>
            <person name="Coruzzi G."/>
            <person name="Lacombe B."/>
        </authorList>
    </citation>
    <scope>GENE FAMILY</scope>
    <scope>NOMENCLATURE</scope>
</reference>
<protein>
    <recommendedName>
        <fullName>Protein NRT1/ PTR FAMILY 5.4</fullName>
        <shortName>AtNPF5.4</shortName>
    </recommendedName>
</protein>
<sequence>MADSTSLINKRTKGGWNAALFIIVVEIAERFAFYGLASNLITFLTNELGQSTATAAKNINTWIGVSCMFPILGAFLADSILGRFKTVLLTSFIYLLGIVMLPLSVTVVARRMREKVFFMALYVMAVGEGGHKPCVMTFAADQFGEANAEEKAAKTSFFNYWYMAIVLASSIAVLALIFIQERVSWSLGFSIIAGSVVIAIVIFLIGIPKYRKQVPVGSPFTRVAQVMVAALKKWRLSSTRHHYGLCYEEEDEHKLESTNSNQVYLLARTNQFRFLDKATIIDEIDHNKNRNPWRLCTVNQVEEVKLILRLIPIWISLIMFCATLTQLNTFFLKQGSMMDRTIGNHFTIPPAAFQSIVGVTILILIPLYDRVFVPMVRKITNHHSGITSLQRIGVGLFVATFNMVICGLVEAKRLKVARDHGLIDSPKEVVPMSSLWLLPQYILVGIGDVFTIVGMQELFYDQMPETMRSIGAAIFISVVGVGSFVSTGIISTVQTISKSHGEEWLVNNLNRAHLDYYYWIIASLNAVSLCFYLFIANHFLYKKLQDKDDDVESER</sequence>
<gene>
    <name type="primary">NPF5.4</name>
    <name type="ordered locus">At3g54450</name>
    <name type="ORF">T14E10.20</name>
</gene>